<comment type="function">
    <text evidence="1">Receptor for ghrelin, coupled to G-alpha-11 proteins. Stimulates growth hormone secretion. Also binds other growth hormone releasing peptides (GHRP) (e.g. Met-enkephalin and GHRP-6) as well as non-peptide, low molecular weight secretagogues (e.g. L-692,429, MK-0677, adenosine) (By similarity).</text>
</comment>
<comment type="subcellular location">
    <subcellularLocation>
        <location evidence="1">Cell membrane</location>
        <topology evidence="1">Multi-pass membrane protein</topology>
    </subcellularLocation>
</comment>
<comment type="similarity">
    <text evidence="3">Belongs to the G-protein coupled receptor 1 family.</text>
</comment>
<sequence>MWNATLSEEPGYNLTLPDLGWDAPADNDSLTDELLPLFPAPLLAGVTATCVALFVVGIAGNLLTMLVVSRFRELRTTTNLYLSSMAFSDLLIFLCMPLDLVRLWQYRPWNFGDLLCKLFQFVSESCTYATVLTITALSVERYFAICFPLRAKVVVTKGRVKLVILVIWAVAFCSAGPIFVLVGVEHENGTDPRDTNECRATEFAVRSGLLTVMVWVSSVFFFLPVFCLTVLYSLIGRKLWRRKRGEAAVGASLRDQNHKQTVKMLAVVVFAFILCWLPFHVGRYLFSKSFEPGSLEIAQISQYCNLVSFVLFYLSAAINPILYNIMSKKYRVAVFKLLGFEPFSQRKLSTLKDESSRAWTETSINT</sequence>
<protein>
    <recommendedName>
        <fullName>Growth hormone secretagogue receptor type 1</fullName>
        <shortName>GHS-R</shortName>
    </recommendedName>
    <alternativeName>
        <fullName>GH-releasing peptide receptor</fullName>
        <shortName>GHRP</shortName>
    </alternativeName>
    <alternativeName>
        <fullName>Ghrelin receptor</fullName>
    </alternativeName>
</protein>
<accession>A5A4L1</accession>
<gene>
    <name type="primary">GHSR</name>
</gene>
<keyword id="KW-1003">Cell membrane</keyword>
<keyword id="KW-1015">Disulfide bond</keyword>
<keyword id="KW-0297">G-protein coupled receptor</keyword>
<keyword id="KW-0325">Glycoprotein</keyword>
<keyword id="KW-0472">Membrane</keyword>
<keyword id="KW-0675">Receptor</keyword>
<keyword id="KW-1185">Reference proteome</keyword>
<keyword id="KW-0807">Transducer</keyword>
<keyword id="KW-0812">Transmembrane</keyword>
<keyword id="KW-1133">Transmembrane helix</keyword>
<reference key="1">
    <citation type="submission" date="2007-03" db="EMBL/GenBank/DDBJ databases">
        <title>Ghrelin receptor orthologs.</title>
        <authorList>
            <person name="van der Keyl H.K."/>
        </authorList>
    </citation>
    <scope>NUCLEOTIDE SEQUENCE [MRNA]</scope>
</reference>
<evidence type="ECO:0000250" key="1"/>
<evidence type="ECO:0000255" key="2"/>
<evidence type="ECO:0000255" key="3">
    <source>
        <dbReference type="PROSITE-ProRule" id="PRU00521"/>
    </source>
</evidence>
<name>GHSR_MUSPF</name>
<dbReference type="EMBL" id="EF526307">
    <property type="protein sequence ID" value="ABP88931.1"/>
    <property type="molecule type" value="mRNA"/>
</dbReference>
<dbReference type="RefSeq" id="NP_001297094.1">
    <property type="nucleotide sequence ID" value="NM_001310165.1"/>
</dbReference>
<dbReference type="SMR" id="A5A4L1"/>
<dbReference type="STRING" id="9669.ENSMPUP00000017053"/>
<dbReference type="GlyCosmos" id="A5A4L1">
    <property type="glycosylation" value="4 sites, No reported glycans"/>
</dbReference>
<dbReference type="GeneID" id="101675017"/>
<dbReference type="CTD" id="2693"/>
<dbReference type="eggNOG" id="KOG3656">
    <property type="taxonomic scope" value="Eukaryota"/>
</dbReference>
<dbReference type="HOGENOM" id="CLU_009579_6_5_1"/>
<dbReference type="InParanoid" id="A5A4L1"/>
<dbReference type="OMA" id="IGNLMTM"/>
<dbReference type="OrthoDB" id="10011262at2759"/>
<dbReference type="Proteomes" id="UP000000715">
    <property type="component" value="Unplaced"/>
</dbReference>
<dbReference type="GO" id="GO:0009986">
    <property type="term" value="C:cell surface"/>
    <property type="evidence" value="ECO:0007669"/>
    <property type="project" value="Ensembl"/>
</dbReference>
<dbReference type="GO" id="GO:0045121">
    <property type="term" value="C:membrane raft"/>
    <property type="evidence" value="ECO:0007669"/>
    <property type="project" value="Ensembl"/>
</dbReference>
<dbReference type="GO" id="GO:0043005">
    <property type="term" value="C:neuron projection"/>
    <property type="evidence" value="ECO:0007669"/>
    <property type="project" value="Ensembl"/>
</dbReference>
<dbReference type="GO" id="GO:0005886">
    <property type="term" value="C:plasma membrane"/>
    <property type="evidence" value="ECO:0007669"/>
    <property type="project" value="UniProtKB-SubCell"/>
</dbReference>
<dbReference type="GO" id="GO:0001616">
    <property type="term" value="F:growth hormone secretagogue receptor activity"/>
    <property type="evidence" value="ECO:0007669"/>
    <property type="project" value="Ensembl"/>
</dbReference>
<dbReference type="GO" id="GO:0016520">
    <property type="term" value="F:growth hormone-releasing hormone receptor activity"/>
    <property type="evidence" value="ECO:0007669"/>
    <property type="project" value="Ensembl"/>
</dbReference>
<dbReference type="GO" id="GO:0008154">
    <property type="term" value="P:actin polymerization or depolymerization"/>
    <property type="evidence" value="ECO:0007669"/>
    <property type="project" value="Ensembl"/>
</dbReference>
<dbReference type="GO" id="GO:0008343">
    <property type="term" value="P:adult feeding behavior"/>
    <property type="evidence" value="ECO:0007669"/>
    <property type="project" value="Ensembl"/>
</dbReference>
<dbReference type="GO" id="GO:0032869">
    <property type="term" value="P:cellular response to insulin stimulus"/>
    <property type="evidence" value="ECO:0007669"/>
    <property type="project" value="Ensembl"/>
</dbReference>
<dbReference type="GO" id="GO:0046697">
    <property type="term" value="P:decidualization"/>
    <property type="evidence" value="ECO:0007669"/>
    <property type="project" value="Ensembl"/>
</dbReference>
<dbReference type="GO" id="GO:0030252">
    <property type="term" value="P:growth hormone secretion"/>
    <property type="evidence" value="ECO:0007669"/>
    <property type="project" value="Ensembl"/>
</dbReference>
<dbReference type="GO" id="GO:0009755">
    <property type="term" value="P:hormone-mediated signaling pathway"/>
    <property type="evidence" value="ECO:0007669"/>
    <property type="project" value="Ensembl"/>
</dbReference>
<dbReference type="GO" id="GO:0048009">
    <property type="term" value="P:insulin-like growth factor receptor signaling pathway"/>
    <property type="evidence" value="ECO:0007669"/>
    <property type="project" value="Ensembl"/>
</dbReference>
<dbReference type="GO" id="GO:0050728">
    <property type="term" value="P:negative regulation of inflammatory response"/>
    <property type="evidence" value="ECO:0007669"/>
    <property type="project" value="Ensembl"/>
</dbReference>
<dbReference type="GO" id="GO:0032691">
    <property type="term" value="P:negative regulation of interleukin-1 beta production"/>
    <property type="evidence" value="ECO:0007669"/>
    <property type="project" value="Ensembl"/>
</dbReference>
<dbReference type="GO" id="GO:0032715">
    <property type="term" value="P:negative regulation of interleukin-6 production"/>
    <property type="evidence" value="ECO:0007669"/>
    <property type="project" value="Ensembl"/>
</dbReference>
<dbReference type="GO" id="GO:0032720">
    <property type="term" value="P:negative regulation of tumor necrosis factor production"/>
    <property type="evidence" value="ECO:0007669"/>
    <property type="project" value="Ensembl"/>
</dbReference>
<dbReference type="GO" id="GO:0032100">
    <property type="term" value="P:positive regulation of appetite"/>
    <property type="evidence" value="ECO:0007669"/>
    <property type="project" value="Ensembl"/>
</dbReference>
<dbReference type="GO" id="GO:0043568">
    <property type="term" value="P:positive regulation of insulin-like growth factor receptor signaling pathway"/>
    <property type="evidence" value="ECO:0007669"/>
    <property type="project" value="Ensembl"/>
</dbReference>
<dbReference type="GO" id="GO:0040018">
    <property type="term" value="P:positive regulation of multicellular organism growth"/>
    <property type="evidence" value="ECO:0007669"/>
    <property type="project" value="Ensembl"/>
</dbReference>
<dbReference type="GO" id="GO:0051963">
    <property type="term" value="P:regulation of synapse assembly"/>
    <property type="evidence" value="ECO:0007669"/>
    <property type="project" value="Ensembl"/>
</dbReference>
<dbReference type="GO" id="GO:0032094">
    <property type="term" value="P:response to food"/>
    <property type="evidence" value="ECO:0007669"/>
    <property type="project" value="Ensembl"/>
</dbReference>
<dbReference type="CDD" id="cd15131">
    <property type="entry name" value="7tmA_GHSR"/>
    <property type="match status" value="1"/>
</dbReference>
<dbReference type="FunFam" id="1.20.1070.10:FF:000125">
    <property type="entry name" value="growth hormone secretagogue receptor type 1"/>
    <property type="match status" value="1"/>
</dbReference>
<dbReference type="Gene3D" id="1.20.1070.10">
    <property type="entry name" value="Rhodopsin 7-helix transmembrane proteins"/>
    <property type="match status" value="1"/>
</dbReference>
<dbReference type="InterPro" id="IPR003905">
    <property type="entry name" value="GHS-R/MTLR"/>
</dbReference>
<dbReference type="InterPro" id="IPR000276">
    <property type="entry name" value="GPCR_Rhodpsn"/>
</dbReference>
<dbReference type="InterPro" id="IPR017452">
    <property type="entry name" value="GPCR_Rhodpsn_7TM"/>
</dbReference>
<dbReference type="PANTHER" id="PTHR24243">
    <property type="entry name" value="G-PROTEIN COUPLED RECEPTOR"/>
    <property type="match status" value="1"/>
</dbReference>
<dbReference type="PANTHER" id="PTHR24243:SF7">
    <property type="entry name" value="GROWTH HORMONE SECRETAGOGUE RECEPTOR TYPE 1"/>
    <property type="match status" value="1"/>
</dbReference>
<dbReference type="Pfam" id="PF00001">
    <property type="entry name" value="7tm_1"/>
    <property type="match status" value="1"/>
</dbReference>
<dbReference type="PRINTS" id="PR01417">
    <property type="entry name" value="GHSRECEPTOR"/>
</dbReference>
<dbReference type="PRINTS" id="PR00237">
    <property type="entry name" value="GPCRRHODOPSN"/>
</dbReference>
<dbReference type="SUPFAM" id="SSF81321">
    <property type="entry name" value="Family A G protein-coupled receptor-like"/>
    <property type="match status" value="1"/>
</dbReference>
<dbReference type="PROSITE" id="PS00237">
    <property type="entry name" value="G_PROTEIN_RECEP_F1_1"/>
    <property type="match status" value="1"/>
</dbReference>
<dbReference type="PROSITE" id="PS50262">
    <property type="entry name" value="G_PROTEIN_RECEP_F1_2"/>
    <property type="match status" value="1"/>
</dbReference>
<organism>
    <name type="scientific">Mustela putorius furo</name>
    <name type="common">European domestic ferret</name>
    <name type="synonym">Mustela furo</name>
    <dbReference type="NCBI Taxonomy" id="9669"/>
    <lineage>
        <taxon>Eukaryota</taxon>
        <taxon>Metazoa</taxon>
        <taxon>Chordata</taxon>
        <taxon>Craniata</taxon>
        <taxon>Vertebrata</taxon>
        <taxon>Euteleostomi</taxon>
        <taxon>Mammalia</taxon>
        <taxon>Eutheria</taxon>
        <taxon>Laurasiatheria</taxon>
        <taxon>Carnivora</taxon>
        <taxon>Caniformia</taxon>
        <taxon>Musteloidea</taxon>
        <taxon>Mustelidae</taxon>
        <taxon>Mustelinae</taxon>
        <taxon>Mustela</taxon>
    </lineage>
</organism>
<feature type="chain" id="PRO_0000310945" description="Growth hormone secretagogue receptor type 1">
    <location>
        <begin position="1"/>
        <end position="366"/>
    </location>
</feature>
<feature type="topological domain" description="Extracellular" evidence="2">
    <location>
        <begin position="1"/>
        <end position="40"/>
    </location>
</feature>
<feature type="transmembrane region" description="Helical; Name=1" evidence="2">
    <location>
        <begin position="41"/>
        <end position="66"/>
    </location>
</feature>
<feature type="topological domain" description="Cytoplasmic" evidence="2">
    <location>
        <begin position="67"/>
        <end position="72"/>
    </location>
</feature>
<feature type="transmembrane region" description="Helical; Name=2" evidence="2">
    <location>
        <begin position="73"/>
        <end position="96"/>
    </location>
</feature>
<feature type="topological domain" description="Extracellular" evidence="2">
    <location>
        <begin position="97"/>
        <end position="117"/>
    </location>
</feature>
<feature type="transmembrane region" description="Helical; Name=3" evidence="2">
    <location>
        <begin position="118"/>
        <end position="139"/>
    </location>
</feature>
<feature type="topological domain" description="Cytoplasmic" evidence="2">
    <location>
        <begin position="140"/>
        <end position="162"/>
    </location>
</feature>
<feature type="transmembrane region" description="Helical; Name=4" evidence="2">
    <location>
        <begin position="163"/>
        <end position="183"/>
    </location>
</feature>
<feature type="topological domain" description="Extracellular" evidence="2">
    <location>
        <begin position="184"/>
        <end position="211"/>
    </location>
</feature>
<feature type="transmembrane region" description="Helical; Name=5" evidence="2">
    <location>
        <begin position="212"/>
        <end position="235"/>
    </location>
</feature>
<feature type="topological domain" description="Cytoplasmic" evidence="2">
    <location>
        <begin position="236"/>
        <end position="263"/>
    </location>
</feature>
<feature type="transmembrane region" description="Helical; Name=6" evidence="2">
    <location>
        <begin position="264"/>
        <end position="285"/>
    </location>
</feature>
<feature type="topological domain" description="Extracellular" evidence="2">
    <location>
        <begin position="286"/>
        <end position="302"/>
    </location>
</feature>
<feature type="transmembrane region" description="Helical; Name=7" evidence="2">
    <location>
        <begin position="303"/>
        <end position="326"/>
    </location>
</feature>
<feature type="topological domain" description="Cytoplasmic" evidence="2">
    <location>
        <begin position="327"/>
        <end position="366"/>
    </location>
</feature>
<feature type="glycosylation site" description="N-linked (GlcNAc...) asparagine" evidence="2">
    <location>
        <position position="3"/>
    </location>
</feature>
<feature type="glycosylation site" description="N-linked (GlcNAc...) asparagine" evidence="2">
    <location>
        <position position="13"/>
    </location>
</feature>
<feature type="glycosylation site" description="N-linked (GlcNAc...) asparagine" evidence="2">
    <location>
        <position position="27"/>
    </location>
</feature>
<feature type="glycosylation site" description="N-linked (GlcNAc...) asparagine" evidence="2">
    <location>
        <position position="188"/>
    </location>
</feature>
<feature type="disulfide bond" evidence="3">
    <location>
        <begin position="116"/>
        <end position="198"/>
    </location>
</feature>
<proteinExistence type="evidence at transcript level"/>